<protein>
    <recommendedName>
        <fullName evidence="1">3-deoxy-manno-octulosonate cytidylyltransferase</fullName>
        <ecNumber evidence="1">2.7.7.38</ecNumber>
    </recommendedName>
    <alternativeName>
        <fullName evidence="1">CMP-2-keto-3-deoxyoctulosonic acid synthase</fullName>
        <shortName evidence="1">CKS</shortName>
        <shortName evidence="1">CMP-KDO synthase</shortName>
    </alternativeName>
</protein>
<keyword id="KW-0963">Cytoplasm</keyword>
<keyword id="KW-0448">Lipopolysaccharide biosynthesis</keyword>
<keyword id="KW-0548">Nucleotidyltransferase</keyword>
<keyword id="KW-1185">Reference proteome</keyword>
<keyword id="KW-0808">Transferase</keyword>
<evidence type="ECO:0000255" key="1">
    <source>
        <dbReference type="HAMAP-Rule" id="MF_00057"/>
    </source>
</evidence>
<dbReference type="EC" id="2.7.7.38" evidence="1"/>
<dbReference type="EMBL" id="CR378670">
    <property type="protein sequence ID" value="CAG20767.1"/>
    <property type="molecule type" value="Genomic_DNA"/>
</dbReference>
<dbReference type="RefSeq" id="WP_011219052.1">
    <property type="nucleotide sequence ID" value="NC_006370.1"/>
</dbReference>
<dbReference type="SMR" id="Q6LPK9"/>
<dbReference type="STRING" id="298386.PBPRA2382"/>
<dbReference type="KEGG" id="ppr:PBPRA2382"/>
<dbReference type="eggNOG" id="COG1212">
    <property type="taxonomic scope" value="Bacteria"/>
</dbReference>
<dbReference type="HOGENOM" id="CLU_065038_1_0_6"/>
<dbReference type="UniPathway" id="UPA00030"/>
<dbReference type="UniPathway" id="UPA00358">
    <property type="reaction ID" value="UER00476"/>
</dbReference>
<dbReference type="Proteomes" id="UP000000593">
    <property type="component" value="Chromosome 1"/>
</dbReference>
<dbReference type="GO" id="GO:0005829">
    <property type="term" value="C:cytosol"/>
    <property type="evidence" value="ECO:0007669"/>
    <property type="project" value="TreeGrafter"/>
</dbReference>
<dbReference type="GO" id="GO:0008690">
    <property type="term" value="F:3-deoxy-manno-octulosonate cytidylyltransferase activity"/>
    <property type="evidence" value="ECO:0007669"/>
    <property type="project" value="UniProtKB-UniRule"/>
</dbReference>
<dbReference type="GO" id="GO:0033468">
    <property type="term" value="P:CMP-keto-3-deoxy-D-manno-octulosonic acid biosynthetic process"/>
    <property type="evidence" value="ECO:0007669"/>
    <property type="project" value="UniProtKB-UniRule"/>
</dbReference>
<dbReference type="GO" id="GO:0009103">
    <property type="term" value="P:lipopolysaccharide biosynthetic process"/>
    <property type="evidence" value="ECO:0007669"/>
    <property type="project" value="UniProtKB-UniRule"/>
</dbReference>
<dbReference type="CDD" id="cd02517">
    <property type="entry name" value="CMP-KDO-Synthetase"/>
    <property type="match status" value="1"/>
</dbReference>
<dbReference type="FunFam" id="3.90.550.10:FF:000011">
    <property type="entry name" value="3-deoxy-manno-octulosonate cytidylyltransferase"/>
    <property type="match status" value="1"/>
</dbReference>
<dbReference type="Gene3D" id="3.90.550.10">
    <property type="entry name" value="Spore Coat Polysaccharide Biosynthesis Protein SpsA, Chain A"/>
    <property type="match status" value="1"/>
</dbReference>
<dbReference type="HAMAP" id="MF_00057">
    <property type="entry name" value="KdsB"/>
    <property type="match status" value="1"/>
</dbReference>
<dbReference type="InterPro" id="IPR003329">
    <property type="entry name" value="Cytidylyl_trans"/>
</dbReference>
<dbReference type="InterPro" id="IPR004528">
    <property type="entry name" value="KdsB"/>
</dbReference>
<dbReference type="InterPro" id="IPR029044">
    <property type="entry name" value="Nucleotide-diphossugar_trans"/>
</dbReference>
<dbReference type="NCBIfam" id="TIGR00466">
    <property type="entry name" value="kdsB"/>
    <property type="match status" value="1"/>
</dbReference>
<dbReference type="NCBIfam" id="NF003950">
    <property type="entry name" value="PRK05450.1-3"/>
    <property type="match status" value="1"/>
</dbReference>
<dbReference type="NCBIfam" id="NF003952">
    <property type="entry name" value="PRK05450.1-5"/>
    <property type="match status" value="1"/>
</dbReference>
<dbReference type="NCBIfam" id="NF009905">
    <property type="entry name" value="PRK13368.1"/>
    <property type="match status" value="1"/>
</dbReference>
<dbReference type="PANTHER" id="PTHR42866">
    <property type="entry name" value="3-DEOXY-MANNO-OCTULOSONATE CYTIDYLYLTRANSFERASE"/>
    <property type="match status" value="1"/>
</dbReference>
<dbReference type="PANTHER" id="PTHR42866:SF2">
    <property type="entry name" value="3-DEOXY-MANNO-OCTULOSONATE CYTIDYLYLTRANSFERASE, MITOCHONDRIAL"/>
    <property type="match status" value="1"/>
</dbReference>
<dbReference type="Pfam" id="PF02348">
    <property type="entry name" value="CTP_transf_3"/>
    <property type="match status" value="1"/>
</dbReference>
<dbReference type="SUPFAM" id="SSF53448">
    <property type="entry name" value="Nucleotide-diphospho-sugar transferases"/>
    <property type="match status" value="1"/>
</dbReference>
<gene>
    <name evidence="1" type="primary">kdsB</name>
    <name type="ordered locus">PBPRA2382</name>
</gene>
<feature type="chain" id="PRO_1000003371" description="3-deoxy-manno-octulosonate cytidylyltransferase">
    <location>
        <begin position="1"/>
        <end position="248"/>
    </location>
</feature>
<accession>Q6LPK9</accession>
<organism>
    <name type="scientific">Photobacterium profundum (strain SS9)</name>
    <dbReference type="NCBI Taxonomy" id="298386"/>
    <lineage>
        <taxon>Bacteria</taxon>
        <taxon>Pseudomonadati</taxon>
        <taxon>Pseudomonadota</taxon>
        <taxon>Gammaproteobacteria</taxon>
        <taxon>Vibrionales</taxon>
        <taxon>Vibrionaceae</taxon>
        <taxon>Photobacterium</taxon>
    </lineage>
</organism>
<name>KDSB_PHOPR</name>
<proteinExistence type="inferred from homology"/>
<reference key="1">
    <citation type="journal article" date="2005" name="Science">
        <title>Life at depth: Photobacterium profundum genome sequence and expression analysis.</title>
        <authorList>
            <person name="Vezzi A."/>
            <person name="Campanaro S."/>
            <person name="D'Angelo M."/>
            <person name="Simonato F."/>
            <person name="Vitulo N."/>
            <person name="Lauro F.M."/>
            <person name="Cestaro A."/>
            <person name="Malacrida G."/>
            <person name="Simionati B."/>
            <person name="Cannata N."/>
            <person name="Romualdi C."/>
            <person name="Bartlett D.H."/>
            <person name="Valle G."/>
        </authorList>
    </citation>
    <scope>NUCLEOTIDE SEQUENCE [LARGE SCALE GENOMIC DNA]</scope>
    <source>
        <strain>ATCC BAA-1253 / SS9</strain>
    </source>
</reference>
<sequence>MSFTVVIPARYQSTRLPGKPLADIGGKPMVQWVYEQASKAGADLVIVATDDQRIVDAVKAFGGEVCLTRDDHESGTERLAEVVEKYQLADDHIVVNVQGDEPLIPDTIIRQVADNLANNNAPMATLGVEIDHEDEVFNPNAVKVVLDKDGYAMYFSRASIPWDRDNYAKSPKEIHHNLLRHVGIYAYRAGFINTYINWEPSALEKVEALEQLRVLWYGEKIHVAVAIDAPPAGVDTPEDLEKVRALIG</sequence>
<comment type="function">
    <text evidence="1">Activates KDO (a required 8-carbon sugar) for incorporation into bacterial lipopolysaccharide in Gram-negative bacteria.</text>
</comment>
<comment type="catalytic activity">
    <reaction evidence="1">
        <text>3-deoxy-alpha-D-manno-oct-2-ulosonate + CTP = CMP-3-deoxy-beta-D-manno-octulosonate + diphosphate</text>
        <dbReference type="Rhea" id="RHEA:23448"/>
        <dbReference type="ChEBI" id="CHEBI:33019"/>
        <dbReference type="ChEBI" id="CHEBI:37563"/>
        <dbReference type="ChEBI" id="CHEBI:85986"/>
        <dbReference type="ChEBI" id="CHEBI:85987"/>
        <dbReference type="EC" id="2.7.7.38"/>
    </reaction>
</comment>
<comment type="pathway">
    <text evidence="1">Nucleotide-sugar biosynthesis; CMP-3-deoxy-D-manno-octulosonate biosynthesis; CMP-3-deoxy-D-manno-octulosonate from 3-deoxy-D-manno-octulosonate and CTP: step 1/1.</text>
</comment>
<comment type="pathway">
    <text evidence="1">Bacterial outer membrane biogenesis; lipopolysaccharide biosynthesis.</text>
</comment>
<comment type="subcellular location">
    <subcellularLocation>
        <location evidence="1">Cytoplasm</location>
    </subcellularLocation>
</comment>
<comment type="similarity">
    <text evidence="1">Belongs to the KdsB family.</text>
</comment>